<evidence type="ECO:0000255" key="1">
    <source>
        <dbReference type="HAMAP-Rule" id="MF_01384"/>
    </source>
</evidence>
<dbReference type="EMBL" id="CP000526">
    <property type="protein sequence ID" value="ABM51548.1"/>
    <property type="molecule type" value="Genomic_DNA"/>
</dbReference>
<dbReference type="RefSeq" id="WP_004185533.1">
    <property type="nucleotide sequence ID" value="NC_008785.1"/>
</dbReference>
<dbReference type="SMR" id="A1V1H0"/>
<dbReference type="KEGG" id="bmv:BMASAVP1_A0727"/>
<dbReference type="HOGENOM" id="CLU_056339_0_0_4"/>
<dbReference type="GO" id="GO:0005737">
    <property type="term" value="C:cytoplasm"/>
    <property type="evidence" value="ECO:0007669"/>
    <property type="project" value="UniProtKB-SubCell"/>
</dbReference>
<dbReference type="GO" id="GO:0016151">
    <property type="term" value="F:nickel cation binding"/>
    <property type="evidence" value="ECO:0007669"/>
    <property type="project" value="UniProtKB-UniRule"/>
</dbReference>
<dbReference type="HAMAP" id="MF_01384">
    <property type="entry name" value="UreD"/>
    <property type="match status" value="1"/>
</dbReference>
<dbReference type="InterPro" id="IPR002669">
    <property type="entry name" value="UreD"/>
</dbReference>
<dbReference type="PANTHER" id="PTHR33643">
    <property type="entry name" value="UREASE ACCESSORY PROTEIN D"/>
    <property type="match status" value="1"/>
</dbReference>
<dbReference type="PANTHER" id="PTHR33643:SF1">
    <property type="entry name" value="UREASE ACCESSORY PROTEIN D"/>
    <property type="match status" value="1"/>
</dbReference>
<dbReference type="Pfam" id="PF01774">
    <property type="entry name" value="UreD"/>
    <property type="match status" value="1"/>
</dbReference>
<feature type="chain" id="PRO_0000340436" description="Urease accessory protein UreD">
    <location>
        <begin position="1"/>
        <end position="291"/>
    </location>
</feature>
<accession>A1V1H0</accession>
<name>URED_BURMS</name>
<keyword id="KW-0143">Chaperone</keyword>
<keyword id="KW-0963">Cytoplasm</keyword>
<keyword id="KW-0996">Nickel insertion</keyword>
<organism>
    <name type="scientific">Burkholderia mallei (strain SAVP1)</name>
    <dbReference type="NCBI Taxonomy" id="320388"/>
    <lineage>
        <taxon>Bacteria</taxon>
        <taxon>Pseudomonadati</taxon>
        <taxon>Pseudomonadota</taxon>
        <taxon>Betaproteobacteria</taxon>
        <taxon>Burkholderiales</taxon>
        <taxon>Burkholderiaceae</taxon>
        <taxon>Burkholderia</taxon>
        <taxon>pseudomallei group</taxon>
    </lineage>
</organism>
<proteinExistence type="inferred from homology"/>
<sequence length="291" mass="30980">MSAHEPHTSLVRPAAKAWHARLELGFERQPGGRTALAHRRHVGPLRVQRALYPEGDAICHAVIVHPPGGVAGGDRLEIDVRLDAGTHAVLTTPGATKWYKSNGLDARQRIDIDVGAHAKLDWLPQNNLFFDAAHASLEFVLALGDGASVLGWDATQLGRQAAGEAWSAGSIASFSKIVGPSGRPLWVERARLDAGDPLRAAPQGLGGFAVYGTLWALGAACTEALAESIAPALPFDDALRAGVTCVAPGTLLIRALAHSMEALQRLLAEQWLALRPIVHGVDPKPLRLWQT</sequence>
<comment type="function">
    <text evidence="1">Required for maturation of urease via the functional incorporation of the urease nickel metallocenter.</text>
</comment>
<comment type="subunit">
    <text evidence="1">UreD, UreF and UreG form a complex that acts as a GTP-hydrolysis-dependent molecular chaperone, activating the urease apoprotein by helping to assemble the nickel containing metallocenter of UreC. The UreE protein probably delivers the nickel.</text>
</comment>
<comment type="subcellular location">
    <subcellularLocation>
        <location evidence="1">Cytoplasm</location>
    </subcellularLocation>
</comment>
<comment type="similarity">
    <text evidence="1">Belongs to the UreD family.</text>
</comment>
<protein>
    <recommendedName>
        <fullName evidence="1">Urease accessory protein UreD</fullName>
    </recommendedName>
</protein>
<reference key="1">
    <citation type="journal article" date="2010" name="Genome Biol. Evol.">
        <title>Continuing evolution of Burkholderia mallei through genome reduction and large-scale rearrangements.</title>
        <authorList>
            <person name="Losada L."/>
            <person name="Ronning C.M."/>
            <person name="DeShazer D."/>
            <person name="Woods D."/>
            <person name="Fedorova N."/>
            <person name="Kim H.S."/>
            <person name="Shabalina S.A."/>
            <person name="Pearson T.R."/>
            <person name="Brinkac L."/>
            <person name="Tan P."/>
            <person name="Nandi T."/>
            <person name="Crabtree J."/>
            <person name="Badger J."/>
            <person name="Beckstrom-Sternberg S."/>
            <person name="Saqib M."/>
            <person name="Schutzer S.E."/>
            <person name="Keim P."/>
            <person name="Nierman W.C."/>
        </authorList>
    </citation>
    <scope>NUCLEOTIDE SEQUENCE [LARGE SCALE GENOMIC DNA]</scope>
    <source>
        <strain>SAVP1</strain>
    </source>
</reference>
<gene>
    <name evidence="1" type="primary">ureD</name>
    <name type="ordered locus">BMASAVP1_A0727</name>
</gene>